<proteinExistence type="inferred from homology"/>
<accession>A6WPK6</accession>
<sequence length="709" mass="79710">MLNFFAAAPKGFEYSLAQELTEFGATEVKESVAGVYFTASLALAYRITLWTRLASRIVLVIYKGSCESAEQLYNAAYCVDWPAHFSNKSTFSIDFHGTGGFLNNTQFGALKIKDAIVDRFRDDDIERPNVSRVDAEFKVDAHFRNGVITIAMNFSGPSLHQRGYRSTTGEAPLKENLAANMLVRSGWQAAPSTLLDPFCGSGTVLIEAALMAADIAPGLQRSRFGFEHWRRHDKAVWQEIVEEAKARASLGVKRCEIKFYGSDIDSRLVALAKRNAENAGVLELIEFKVADALTITPPAESGYLITNPPYGERLGNVSELLQLYYQLGDKFKKEFGGWKVAMLCSDIELVSSLKLKADKQMKMFNGALECAFNIYTLHANSTRRDTPVLPDGVDIADIAPAFANRIKKNAKLLEKWAKKEGIDSYRIYDADIPEYNVAVDKYLDYVIIQEYMAPATIPEAVTKRRLSDVLLALPSAIGINPNKMIMKTRERQKGTSQYQKLDERKLELITTEYGAKFKLNLTGYLDTGLFLDHRLTRRLVGQKSKGRRVLNLFSYTGSASVHAALGGAKSVTTVDMSNTYIAWAKDNFALNGLQGKQYEFVQSDCMQWIRDCNEQYDLIFIDPPTFSNSKRMEDSFDVQRDHVNLLSSLVKLLSPTGELVFSNNKRKFKMDIETLTKMNINVTNIDDVTLPMDYKRNPHIHNTWLITHA</sequence>
<keyword id="KW-0963">Cytoplasm</keyword>
<keyword id="KW-0489">Methyltransferase</keyword>
<keyword id="KW-0694">RNA-binding</keyword>
<keyword id="KW-0698">rRNA processing</keyword>
<keyword id="KW-0949">S-adenosyl-L-methionine</keyword>
<keyword id="KW-0808">Transferase</keyword>
<reference key="1">
    <citation type="submission" date="2007-07" db="EMBL/GenBank/DDBJ databases">
        <title>Complete sequence of chromosome of Shewanella baltica OS185.</title>
        <authorList>
            <consortium name="US DOE Joint Genome Institute"/>
            <person name="Copeland A."/>
            <person name="Lucas S."/>
            <person name="Lapidus A."/>
            <person name="Barry K."/>
            <person name="Glavina del Rio T."/>
            <person name="Dalin E."/>
            <person name="Tice H."/>
            <person name="Pitluck S."/>
            <person name="Sims D."/>
            <person name="Brettin T."/>
            <person name="Bruce D."/>
            <person name="Detter J.C."/>
            <person name="Han C."/>
            <person name="Schmutz J."/>
            <person name="Larimer F."/>
            <person name="Land M."/>
            <person name="Hauser L."/>
            <person name="Kyrpides N."/>
            <person name="Mikhailova N."/>
            <person name="Brettar I."/>
            <person name="Rodrigues J."/>
            <person name="Konstantinidis K."/>
            <person name="Tiedje J."/>
            <person name="Richardson P."/>
        </authorList>
    </citation>
    <scope>NUCLEOTIDE SEQUENCE [LARGE SCALE GENOMIC DNA]</scope>
    <source>
        <strain>OS185</strain>
    </source>
</reference>
<protein>
    <recommendedName>
        <fullName evidence="1">Ribosomal RNA large subunit methyltransferase K/L</fullName>
    </recommendedName>
    <domain>
        <recommendedName>
            <fullName evidence="1">23S rRNA m2G2445 methyltransferase</fullName>
            <ecNumber evidence="1">2.1.1.173</ecNumber>
        </recommendedName>
        <alternativeName>
            <fullName evidence="1">rRNA (guanine-N(2)-)-methyltransferase RlmL</fullName>
        </alternativeName>
    </domain>
    <domain>
        <recommendedName>
            <fullName evidence="1">23S rRNA m7G2069 methyltransferase</fullName>
            <ecNumber evidence="1">2.1.1.264</ecNumber>
        </recommendedName>
        <alternativeName>
            <fullName evidence="1">rRNA (guanine-N(7)-)-methyltransferase RlmK</fullName>
        </alternativeName>
    </domain>
</protein>
<dbReference type="EC" id="2.1.1.173" evidence="1"/>
<dbReference type="EC" id="2.1.1.264" evidence="1"/>
<dbReference type="EMBL" id="CP000753">
    <property type="protein sequence ID" value="ABS08745.1"/>
    <property type="molecule type" value="Genomic_DNA"/>
</dbReference>
<dbReference type="RefSeq" id="WP_012089489.1">
    <property type="nucleotide sequence ID" value="NC_009665.1"/>
</dbReference>
<dbReference type="SMR" id="A6WPK6"/>
<dbReference type="KEGG" id="sbm:Shew185_2610"/>
<dbReference type="HOGENOM" id="CLU_014042_2_0_6"/>
<dbReference type="GO" id="GO:0005737">
    <property type="term" value="C:cytoplasm"/>
    <property type="evidence" value="ECO:0007669"/>
    <property type="project" value="UniProtKB-SubCell"/>
</dbReference>
<dbReference type="GO" id="GO:0052915">
    <property type="term" value="F:23S rRNA (guanine(2445)-N(2))-methyltransferase activity"/>
    <property type="evidence" value="ECO:0007669"/>
    <property type="project" value="UniProtKB-UniRule"/>
</dbReference>
<dbReference type="GO" id="GO:0003723">
    <property type="term" value="F:RNA binding"/>
    <property type="evidence" value="ECO:0007669"/>
    <property type="project" value="UniProtKB-KW"/>
</dbReference>
<dbReference type="GO" id="GO:0070043">
    <property type="term" value="F:rRNA (guanine-N7-)-methyltransferase activity"/>
    <property type="evidence" value="ECO:0007669"/>
    <property type="project" value="UniProtKB-UniRule"/>
</dbReference>
<dbReference type="CDD" id="cd02440">
    <property type="entry name" value="AdoMet_MTases"/>
    <property type="match status" value="2"/>
</dbReference>
<dbReference type="CDD" id="cd11715">
    <property type="entry name" value="THUMP_AdoMetMT"/>
    <property type="match status" value="1"/>
</dbReference>
<dbReference type="FunFam" id="3.40.50.150:FF:000039">
    <property type="entry name" value="Ribosomal RNA large subunit methyltransferase K/L"/>
    <property type="match status" value="1"/>
</dbReference>
<dbReference type="Gene3D" id="3.30.2130.30">
    <property type="match status" value="1"/>
</dbReference>
<dbReference type="Gene3D" id="3.30.750.80">
    <property type="entry name" value="RNA methyltransferase domain (HRMD) like"/>
    <property type="match status" value="1"/>
</dbReference>
<dbReference type="Gene3D" id="3.40.50.150">
    <property type="entry name" value="Vaccinia Virus protein VP39"/>
    <property type="match status" value="2"/>
</dbReference>
<dbReference type="HAMAP" id="MF_01858">
    <property type="entry name" value="23SrRNA_methyltr_KL"/>
    <property type="match status" value="1"/>
</dbReference>
<dbReference type="InterPro" id="IPR017244">
    <property type="entry name" value="23SrRNA_methyltr_KL"/>
</dbReference>
<dbReference type="InterPro" id="IPR002052">
    <property type="entry name" value="DNA_methylase_N6_adenine_CS"/>
</dbReference>
<dbReference type="InterPro" id="IPR000241">
    <property type="entry name" value="RlmKL-like_Mtase"/>
</dbReference>
<dbReference type="InterPro" id="IPR053943">
    <property type="entry name" value="RlmKL-like_Mtase_CS"/>
</dbReference>
<dbReference type="InterPro" id="IPR054170">
    <property type="entry name" value="RlmL_1st"/>
</dbReference>
<dbReference type="InterPro" id="IPR019614">
    <property type="entry name" value="SAM-dep_methyl-trfase"/>
</dbReference>
<dbReference type="InterPro" id="IPR029063">
    <property type="entry name" value="SAM-dependent_MTases_sf"/>
</dbReference>
<dbReference type="InterPro" id="IPR004114">
    <property type="entry name" value="THUMP_dom"/>
</dbReference>
<dbReference type="NCBIfam" id="NF008748">
    <property type="entry name" value="PRK11783.1"/>
    <property type="match status" value="1"/>
</dbReference>
<dbReference type="PANTHER" id="PTHR47313">
    <property type="entry name" value="RIBOSOMAL RNA LARGE SUBUNIT METHYLTRANSFERASE K/L"/>
    <property type="match status" value="1"/>
</dbReference>
<dbReference type="PANTHER" id="PTHR47313:SF1">
    <property type="entry name" value="RIBOSOMAL RNA LARGE SUBUNIT METHYLTRANSFERASE K_L"/>
    <property type="match status" value="1"/>
</dbReference>
<dbReference type="Pfam" id="PF10672">
    <property type="entry name" value="Methyltrans_SAM"/>
    <property type="match status" value="1"/>
</dbReference>
<dbReference type="Pfam" id="PF22020">
    <property type="entry name" value="RlmL_1st"/>
    <property type="match status" value="1"/>
</dbReference>
<dbReference type="Pfam" id="PF02926">
    <property type="entry name" value="THUMP"/>
    <property type="match status" value="1"/>
</dbReference>
<dbReference type="Pfam" id="PF01170">
    <property type="entry name" value="UPF0020"/>
    <property type="match status" value="1"/>
</dbReference>
<dbReference type="PIRSF" id="PIRSF037618">
    <property type="entry name" value="RNA_Mtase_bacteria_prd"/>
    <property type="match status" value="1"/>
</dbReference>
<dbReference type="SMART" id="SM00981">
    <property type="entry name" value="THUMP"/>
    <property type="match status" value="1"/>
</dbReference>
<dbReference type="SUPFAM" id="SSF53335">
    <property type="entry name" value="S-adenosyl-L-methionine-dependent methyltransferases"/>
    <property type="match status" value="2"/>
</dbReference>
<dbReference type="PROSITE" id="PS51165">
    <property type="entry name" value="THUMP"/>
    <property type="match status" value="1"/>
</dbReference>
<dbReference type="PROSITE" id="PS01261">
    <property type="entry name" value="UPF0020"/>
    <property type="match status" value="1"/>
</dbReference>
<name>RLMKL_SHEB8</name>
<organism>
    <name type="scientific">Shewanella baltica (strain OS185)</name>
    <dbReference type="NCBI Taxonomy" id="402882"/>
    <lineage>
        <taxon>Bacteria</taxon>
        <taxon>Pseudomonadati</taxon>
        <taxon>Pseudomonadota</taxon>
        <taxon>Gammaproteobacteria</taxon>
        <taxon>Alteromonadales</taxon>
        <taxon>Shewanellaceae</taxon>
        <taxon>Shewanella</taxon>
    </lineage>
</organism>
<evidence type="ECO:0000255" key="1">
    <source>
        <dbReference type="HAMAP-Rule" id="MF_01858"/>
    </source>
</evidence>
<feature type="chain" id="PRO_0000366821" description="Ribosomal RNA large subunit methyltransferase K/L">
    <location>
        <begin position="1"/>
        <end position="709"/>
    </location>
</feature>
<feature type="domain" description="THUMP" evidence="1">
    <location>
        <begin position="43"/>
        <end position="154"/>
    </location>
</feature>
<comment type="function">
    <text evidence="1">Specifically methylates the guanine in position 2445 (m2G2445) and the guanine in position 2069 (m7G2069) of 23S rRNA.</text>
</comment>
<comment type="catalytic activity">
    <reaction evidence="1">
        <text>guanosine(2445) in 23S rRNA + S-adenosyl-L-methionine = N(2)-methylguanosine(2445) in 23S rRNA + S-adenosyl-L-homocysteine + H(+)</text>
        <dbReference type="Rhea" id="RHEA:42740"/>
        <dbReference type="Rhea" id="RHEA-COMP:10215"/>
        <dbReference type="Rhea" id="RHEA-COMP:10216"/>
        <dbReference type="ChEBI" id="CHEBI:15378"/>
        <dbReference type="ChEBI" id="CHEBI:57856"/>
        <dbReference type="ChEBI" id="CHEBI:59789"/>
        <dbReference type="ChEBI" id="CHEBI:74269"/>
        <dbReference type="ChEBI" id="CHEBI:74481"/>
        <dbReference type="EC" id="2.1.1.173"/>
    </reaction>
</comment>
<comment type="catalytic activity">
    <reaction evidence="1">
        <text>guanosine(2069) in 23S rRNA + S-adenosyl-L-methionine = N(2)-methylguanosine(2069) in 23S rRNA + S-adenosyl-L-homocysteine + H(+)</text>
        <dbReference type="Rhea" id="RHEA:43772"/>
        <dbReference type="Rhea" id="RHEA-COMP:10688"/>
        <dbReference type="Rhea" id="RHEA-COMP:10689"/>
        <dbReference type="ChEBI" id="CHEBI:15378"/>
        <dbReference type="ChEBI" id="CHEBI:57856"/>
        <dbReference type="ChEBI" id="CHEBI:59789"/>
        <dbReference type="ChEBI" id="CHEBI:74269"/>
        <dbReference type="ChEBI" id="CHEBI:74481"/>
        <dbReference type="EC" id="2.1.1.264"/>
    </reaction>
</comment>
<comment type="subcellular location">
    <subcellularLocation>
        <location evidence="1">Cytoplasm</location>
    </subcellularLocation>
</comment>
<comment type="similarity">
    <text evidence="1">Belongs to the methyltransferase superfamily. RlmKL family.</text>
</comment>
<gene>
    <name evidence="1" type="primary">rlmL</name>
    <name type="ordered locus">Shew185_2610</name>
</gene>